<feature type="chain" id="PRO_0000084045" description="Haemoporin">
    <location>
        <begin position="1"/>
        <end position="20" status="greater than"/>
    </location>
</feature>
<feature type="region of interest" description="Disordered" evidence="1">
    <location>
        <begin position="1"/>
        <end position="20"/>
    </location>
</feature>
<feature type="non-terminal residue" evidence="3">
    <location>
        <position position="20"/>
    </location>
</feature>
<reference evidence="4" key="1">
    <citation type="journal article" date="2003" name="Biochem. J.">
        <title>Isolation and characterization of haemoporin, an abundant haemolymph protein from Aplysia californica.</title>
        <authorList>
            <person name="Jaenicke E."/>
            <person name="Walsh P.J."/>
            <person name="Decker H."/>
        </authorList>
    </citation>
    <scope>PROTEIN SEQUENCE</scope>
    <scope>SUBUNIT</scope>
    <scope>SUBCELLULAR LOCATION</scope>
    <scope>TISSUE SPECIFICITY</scope>
    <source>
        <tissue evidence="2">Hemolymph</tissue>
    </source>
</reference>
<keyword id="KW-0903">Direct protein sequencing</keyword>
<keyword id="KW-0964">Secreted</keyword>
<accession>P84286</accession>
<evidence type="ECO:0000256" key="1">
    <source>
        <dbReference type="SAM" id="MobiDB-lite"/>
    </source>
</evidence>
<evidence type="ECO:0000269" key="2">
    <source>
    </source>
</evidence>
<evidence type="ECO:0000303" key="3">
    <source>
    </source>
</evidence>
<evidence type="ECO:0000305" key="4"/>
<comment type="subunit">
    <text evidence="2">Homopentamer. Forms a cylindrical structure with a central pore.</text>
</comment>
<comment type="subcellular location">
    <subcellularLocation>
        <location evidence="2">Secreted</location>
    </subcellularLocation>
</comment>
<comment type="tissue specificity">
    <text evidence="2">Detected in the hemolymph.</text>
</comment>
<name>HPOR_APLCA</name>
<dbReference type="Proteomes" id="UP000694888">
    <property type="component" value="Unplaced"/>
</dbReference>
<dbReference type="GO" id="GO:0005576">
    <property type="term" value="C:extracellular region"/>
    <property type="evidence" value="ECO:0007669"/>
    <property type="project" value="UniProtKB-SubCell"/>
</dbReference>
<organism>
    <name type="scientific">Aplysia californica</name>
    <name type="common">California sea hare</name>
    <dbReference type="NCBI Taxonomy" id="6500"/>
    <lineage>
        <taxon>Eukaryota</taxon>
        <taxon>Metazoa</taxon>
        <taxon>Spiralia</taxon>
        <taxon>Lophotrochozoa</taxon>
        <taxon>Mollusca</taxon>
        <taxon>Gastropoda</taxon>
        <taxon>Heterobranchia</taxon>
        <taxon>Euthyneura</taxon>
        <taxon>Tectipleura</taxon>
        <taxon>Aplysiida</taxon>
        <taxon>Aplysioidea</taxon>
        <taxon>Aplysiidae</taxon>
        <taxon>Aplysia</taxon>
    </lineage>
</organism>
<proteinExistence type="evidence at protein level"/>
<sequence length="20" mass="1902">AAVPEAAAEATAEAAPVSEF</sequence>
<protein>
    <recommendedName>
        <fullName>Haemoporin</fullName>
    </recommendedName>
</protein>